<evidence type="ECO:0000255" key="1"/>
<evidence type="ECO:0000256" key="2">
    <source>
        <dbReference type="SAM" id="MobiDB-lite"/>
    </source>
</evidence>
<evidence type="ECO:0000269" key="3">
    <source>
    </source>
</evidence>
<evidence type="ECO:0000305" key="4"/>
<evidence type="ECO:0000312" key="5">
    <source>
        <dbReference type="Proteomes" id="UP000001940"/>
    </source>
</evidence>
<evidence type="ECO:0000312" key="6">
    <source>
        <dbReference type="WormBase" id="T24F1.2"/>
    </source>
</evidence>
<dbReference type="EMBL" id="BX284602">
    <property type="protein sequence ID" value="CAA90140.1"/>
    <property type="molecule type" value="Genomic_DNA"/>
</dbReference>
<dbReference type="PIR" id="T25248">
    <property type="entry name" value="T25248"/>
</dbReference>
<dbReference type="RefSeq" id="NP_496416.1">
    <property type="nucleotide sequence ID" value="NM_064015.7"/>
</dbReference>
<dbReference type="SMR" id="Q22747"/>
<dbReference type="DIP" id="DIP-24366N"/>
<dbReference type="FunCoup" id="Q22747">
    <property type="interactions" value="15"/>
</dbReference>
<dbReference type="IntAct" id="Q22747">
    <property type="interactions" value="6"/>
</dbReference>
<dbReference type="STRING" id="6239.T24F1.2.1"/>
<dbReference type="PaxDb" id="6239-T24F1.2"/>
<dbReference type="PeptideAtlas" id="Q22747"/>
<dbReference type="EnsemblMetazoa" id="T24F1.2.1">
    <property type="protein sequence ID" value="T24F1.2.1"/>
    <property type="gene ID" value="WBGene00011994"/>
</dbReference>
<dbReference type="GeneID" id="174727"/>
<dbReference type="KEGG" id="cel:CELE_T24F1.2"/>
<dbReference type="UCSC" id="T24F1.2">
    <property type="organism name" value="c. elegans"/>
</dbReference>
<dbReference type="AGR" id="WB:WBGene00011994"/>
<dbReference type="CTD" id="174727"/>
<dbReference type="WormBase" id="T24F1.2">
    <property type="protein sequence ID" value="CE02362"/>
    <property type="gene ID" value="WBGene00011994"/>
    <property type="gene designation" value="samp-1"/>
</dbReference>
<dbReference type="eggNOG" id="KOG4623">
    <property type="taxonomic scope" value="Eukaryota"/>
</dbReference>
<dbReference type="HOGENOM" id="CLU_493674_0_0_1"/>
<dbReference type="InParanoid" id="Q22747"/>
<dbReference type="OMA" id="FNIICVL"/>
<dbReference type="OrthoDB" id="10020193at2759"/>
<dbReference type="PRO" id="PR:Q22747"/>
<dbReference type="Proteomes" id="UP000001940">
    <property type="component" value="Chromosome II"/>
</dbReference>
<dbReference type="Bgee" id="WBGene00011994">
    <property type="expression patterns" value="Expressed in adult organism and 4 other cell types or tissues"/>
</dbReference>
<dbReference type="GO" id="GO:0005635">
    <property type="term" value="C:nuclear envelope"/>
    <property type="evidence" value="ECO:0000314"/>
    <property type="project" value="WormBase"/>
</dbReference>
<dbReference type="GO" id="GO:0005637">
    <property type="term" value="C:nuclear inner membrane"/>
    <property type="evidence" value="ECO:0007669"/>
    <property type="project" value="UniProtKB-SubCell"/>
</dbReference>
<dbReference type="GO" id="GO:0031965">
    <property type="term" value="C:nuclear membrane"/>
    <property type="evidence" value="ECO:0000318"/>
    <property type="project" value="GO_Central"/>
</dbReference>
<dbReference type="GO" id="GO:0051015">
    <property type="term" value="F:actin filament binding"/>
    <property type="evidence" value="ECO:0000318"/>
    <property type="project" value="GO_Central"/>
</dbReference>
<dbReference type="GO" id="GO:0005521">
    <property type="term" value="F:lamin binding"/>
    <property type="evidence" value="ECO:0000318"/>
    <property type="project" value="GO_Central"/>
</dbReference>
<dbReference type="GO" id="GO:0009792">
    <property type="term" value="P:embryo development ending in birth or egg hatching"/>
    <property type="evidence" value="ECO:0000315"/>
    <property type="project" value="WormBase"/>
</dbReference>
<dbReference type="GO" id="GO:0030473">
    <property type="term" value="P:nuclear migration along microtubule"/>
    <property type="evidence" value="ECO:0000315"/>
    <property type="project" value="WormBase"/>
</dbReference>
<dbReference type="InterPro" id="IPR018617">
    <property type="entry name" value="Ima1_N"/>
</dbReference>
<dbReference type="InterPro" id="IPR040041">
    <property type="entry name" value="TMEM201"/>
</dbReference>
<dbReference type="PANTHER" id="PTHR28646">
    <property type="entry name" value="TRANSMEMBRANE PROTEIN 201"/>
    <property type="match status" value="1"/>
</dbReference>
<dbReference type="PANTHER" id="PTHR28646:SF1">
    <property type="entry name" value="TRANSMEMBRANE PROTEIN 201"/>
    <property type="match status" value="1"/>
</dbReference>
<dbReference type="Pfam" id="PF09779">
    <property type="entry name" value="Ima1_N"/>
    <property type="match status" value="1"/>
</dbReference>
<gene>
    <name evidence="6" type="primary">samp-1</name>
    <name evidence="6" type="ORF">T24F1.2</name>
</gene>
<name>TM201_CAEEL</name>
<organism evidence="5">
    <name type="scientific">Caenorhabditis elegans</name>
    <dbReference type="NCBI Taxonomy" id="6239"/>
    <lineage>
        <taxon>Eukaryota</taxon>
        <taxon>Metazoa</taxon>
        <taxon>Ecdysozoa</taxon>
        <taxon>Nematoda</taxon>
        <taxon>Chromadorea</taxon>
        <taxon>Rhabditida</taxon>
        <taxon>Rhabditina</taxon>
        <taxon>Rhabditomorpha</taxon>
        <taxon>Rhabditoidea</taxon>
        <taxon>Rhabditidae</taxon>
        <taxon>Peloderinae</taxon>
        <taxon>Caenorhabditis</taxon>
    </lineage>
</organism>
<accession>Q22747</accession>
<sequence length="588" mass="66322">MEVAAAVGVIASVPILYKAIRPRIKTSVECWFCRKSTKVEYQQRNSFTCPSCEQYNGFTEDGDYNRRIPGQAWTTPKRYCEPGKMQSEKPSTFLDRFGGVNMSPKASNGLCSECNLGQEIIMNKVAEFEPIDEDRWNEELEDYRYKLERMYQLCPRCTIQVHGKLEEDKKKYSYLLKVKYKLKHAIGSTLREVMNNQKRSRRFFFAGGSTCEALHFGCLISSIILFLANIDFLQQDAGASLINLPKALQDILPEVYKYSFVINFLIFTTHLIAAFNNKCRVTLPDLLLPILLILAMLTVLTSSDNLSQDVALVRGACASFSTILSMAVTLLPRKKLHKKRPNKIVSSAFSVASTPISQCSSQNSRNASLLDHDHTILRRSPHTPSASPPAMNSSPPLLREITNGPVWSAMRSRENKENMQSYQTKPNNHVESMDWDDSESMAAQSVAQSTRSSHFKPGLLSRNINERMTAQQLTPSVANLNLDTRSVDSPSIFSRQHRQMAQQQNHTPTRSLFGPPRSMVASQYDRSHYMAPEAHTRPGSVFTSVSQQDGHSTVSGAWQCRVIGILFALVFIVLIMQIGLFYVLFTRN</sequence>
<keyword id="KW-0472">Membrane</keyword>
<keyword id="KW-0539">Nucleus</keyword>
<keyword id="KW-1185">Reference proteome</keyword>
<keyword id="KW-0812">Transmembrane</keyword>
<keyword id="KW-1133">Transmembrane helix</keyword>
<comment type="function">
    <text evidence="3">Plays a role in nuclear migration in hypodermal cells.</text>
</comment>
<comment type="subcellular location">
    <subcellularLocation>
        <location evidence="3">Nucleus inner membrane</location>
        <topology evidence="1">Multi-pass membrane protein</topology>
    </subcellularLocation>
    <text evidence="3">Localization at the nuclear envelope does not require lmn-1.</text>
</comment>
<comment type="developmental stage">
    <text evidence="3">Expressed in pre-comma stage embryos, and in particular in hyp7 hypodermal precursor cells.</text>
</comment>
<comment type="disruption phenotype">
    <text evidence="3">Nuclear migration defects in hyp7 hypodermal precursor cells.</text>
</comment>
<comment type="similarity">
    <text evidence="4">Belongs to the TMEM201 family.</text>
</comment>
<feature type="chain" id="PRO_0000445490" description="Transmembrane protein 201 homolog">
    <location>
        <begin position="1"/>
        <end position="588"/>
    </location>
</feature>
<feature type="topological domain" description="Nuclear" evidence="4">
    <location>
        <begin position="1"/>
        <end position="212"/>
    </location>
</feature>
<feature type="transmembrane region" description="Helical" evidence="1">
    <location>
        <begin position="213"/>
        <end position="233"/>
    </location>
</feature>
<feature type="topological domain" description="Perinuclear space" evidence="4">
    <location>
        <begin position="234"/>
        <end position="254"/>
    </location>
</feature>
<feature type="transmembrane region" description="Helical" evidence="1">
    <location>
        <begin position="255"/>
        <end position="275"/>
    </location>
</feature>
<feature type="topological domain" description="Nuclear" evidence="4">
    <location>
        <begin position="276"/>
        <end position="280"/>
    </location>
</feature>
<feature type="transmembrane region" description="Helical" evidence="1">
    <location>
        <begin position="281"/>
        <end position="301"/>
    </location>
</feature>
<feature type="topological domain" description="Perinuclear space" evidence="4">
    <location>
        <begin position="302"/>
        <end position="309"/>
    </location>
</feature>
<feature type="transmembrane region" description="Helical" evidence="1">
    <location>
        <begin position="310"/>
        <end position="330"/>
    </location>
</feature>
<feature type="topological domain" description="Nuclear" evidence="4">
    <location>
        <begin position="331"/>
        <end position="564"/>
    </location>
</feature>
<feature type="transmembrane region" description="Helical" evidence="1">
    <location>
        <begin position="565"/>
        <end position="585"/>
    </location>
</feature>
<feature type="topological domain" description="Perinuclear space" evidence="4">
    <location>
        <begin position="586"/>
        <end position="588"/>
    </location>
</feature>
<feature type="region of interest" description="Disordered" evidence="2">
    <location>
        <begin position="378"/>
        <end position="457"/>
    </location>
</feature>
<feature type="compositionally biased region" description="Low complexity" evidence="2">
    <location>
        <begin position="384"/>
        <end position="396"/>
    </location>
</feature>
<feature type="compositionally biased region" description="Polar residues" evidence="2">
    <location>
        <begin position="418"/>
        <end position="430"/>
    </location>
</feature>
<feature type="compositionally biased region" description="Polar residues" evidence="2">
    <location>
        <begin position="441"/>
        <end position="452"/>
    </location>
</feature>
<proteinExistence type="evidence at transcript level"/>
<reference evidence="5" key="1">
    <citation type="journal article" date="1998" name="Science">
        <title>Genome sequence of the nematode C. elegans: a platform for investigating biology.</title>
        <authorList>
            <consortium name="The C. elegans sequencing consortium"/>
        </authorList>
    </citation>
    <scope>NUCLEOTIDE SEQUENCE [LARGE SCALE GENOMIC DNA]</scope>
    <source>
        <strain evidence="5">Bristol N2</strain>
    </source>
</reference>
<reference evidence="4" key="2">
    <citation type="journal article" date="2014" name="Mol. Biol. Cell">
        <title>The Caenorhabditis elegans SUN protein UNC-84 interacts with lamin to transfer forces from the cytoplasm to the nucleoskeleton during nuclear migration.</title>
        <authorList>
            <person name="Bone C.R."/>
            <person name="Tapley E.C."/>
            <person name="Gorjanacz M."/>
            <person name="Starr D.A."/>
        </authorList>
    </citation>
    <scope>FUNCTION</scope>
    <scope>SUBCELLULAR LOCATION</scope>
    <scope>DEVELOPMENTAL STAGE</scope>
    <scope>DISRUPTION PHENOTYPE</scope>
</reference>
<protein>
    <recommendedName>
        <fullName evidence="4">Transmembrane protein 201 homolog</fullName>
    </recommendedName>
    <alternativeName>
        <fullName evidence="6">Spindle-associated membrane protein homolog</fullName>
    </alternativeName>
</protein>